<proteinExistence type="inferred from homology"/>
<sequence>MFHEIVVLLFIFLIALIGKNDLVATAGALLFVMKFSPLSNVFPFLTERGIELGILLLTLSVLTPFAAGDIMPRDLLSTLKSPAGLIAVFSGIVASYLTGHGVELLRSRPEVMVGLIVGSIIGASFLKGVPAGPLVAAGLAAVLIKSLNL</sequence>
<accession>B2A6J4</accession>
<comment type="subcellular location">
    <subcellularLocation>
        <location evidence="1">Cell membrane</location>
        <topology evidence="1">Multi-pass membrane protein</topology>
    </subcellularLocation>
</comment>
<comment type="similarity">
    <text evidence="1">Belongs to the UPF0756 family.</text>
</comment>
<protein>
    <recommendedName>
        <fullName evidence="1">UPF0756 membrane protein Nther_1957</fullName>
    </recommendedName>
</protein>
<dbReference type="EMBL" id="CP001034">
    <property type="protein sequence ID" value="ACB85527.1"/>
    <property type="molecule type" value="Genomic_DNA"/>
</dbReference>
<dbReference type="RefSeq" id="WP_012448386.1">
    <property type="nucleotide sequence ID" value="NC_010718.1"/>
</dbReference>
<dbReference type="FunCoup" id="B2A6J4">
    <property type="interactions" value="1"/>
</dbReference>
<dbReference type="STRING" id="457570.Nther_1957"/>
<dbReference type="KEGG" id="nth:Nther_1957"/>
<dbReference type="eggNOG" id="COG2707">
    <property type="taxonomic scope" value="Bacteria"/>
</dbReference>
<dbReference type="HOGENOM" id="CLU_125889_0_0_9"/>
<dbReference type="InParanoid" id="B2A6J4"/>
<dbReference type="OrthoDB" id="80306at2"/>
<dbReference type="Proteomes" id="UP000001683">
    <property type="component" value="Chromosome"/>
</dbReference>
<dbReference type="GO" id="GO:0005886">
    <property type="term" value="C:plasma membrane"/>
    <property type="evidence" value="ECO:0007669"/>
    <property type="project" value="UniProtKB-SubCell"/>
</dbReference>
<dbReference type="HAMAP" id="MF_01874">
    <property type="entry name" value="UPF0756"/>
    <property type="match status" value="1"/>
</dbReference>
<dbReference type="InterPro" id="IPR007382">
    <property type="entry name" value="UPF0756_TM"/>
</dbReference>
<dbReference type="PANTHER" id="PTHR38452">
    <property type="entry name" value="UPF0756 MEMBRANE PROTEIN YEAL"/>
    <property type="match status" value="1"/>
</dbReference>
<dbReference type="PANTHER" id="PTHR38452:SF1">
    <property type="entry name" value="UPF0756 MEMBRANE PROTEIN YEAL"/>
    <property type="match status" value="1"/>
</dbReference>
<dbReference type="Pfam" id="PF04284">
    <property type="entry name" value="DUF441"/>
    <property type="match status" value="1"/>
</dbReference>
<evidence type="ECO:0000255" key="1">
    <source>
        <dbReference type="HAMAP-Rule" id="MF_01874"/>
    </source>
</evidence>
<keyword id="KW-1003">Cell membrane</keyword>
<keyword id="KW-0472">Membrane</keyword>
<keyword id="KW-1185">Reference proteome</keyword>
<keyword id="KW-0812">Transmembrane</keyword>
<keyword id="KW-1133">Transmembrane helix</keyword>
<reference key="1">
    <citation type="submission" date="2008-04" db="EMBL/GenBank/DDBJ databases">
        <title>Complete sequence of chromosome of Natranaerobius thermophilus JW/NM-WN-LF.</title>
        <authorList>
            <consortium name="US DOE Joint Genome Institute"/>
            <person name="Copeland A."/>
            <person name="Lucas S."/>
            <person name="Lapidus A."/>
            <person name="Glavina del Rio T."/>
            <person name="Dalin E."/>
            <person name="Tice H."/>
            <person name="Bruce D."/>
            <person name="Goodwin L."/>
            <person name="Pitluck S."/>
            <person name="Chertkov O."/>
            <person name="Brettin T."/>
            <person name="Detter J.C."/>
            <person name="Han C."/>
            <person name="Kuske C.R."/>
            <person name="Schmutz J."/>
            <person name="Larimer F."/>
            <person name="Land M."/>
            <person name="Hauser L."/>
            <person name="Kyrpides N."/>
            <person name="Lykidis A."/>
            <person name="Mesbah N.M."/>
            <person name="Wiegel J."/>
        </authorList>
    </citation>
    <scope>NUCLEOTIDE SEQUENCE [LARGE SCALE GENOMIC DNA]</scope>
    <source>
        <strain>ATCC BAA-1301 / DSM 18059 / JW/NM-WN-LF</strain>
    </source>
</reference>
<organism>
    <name type="scientific">Natranaerobius thermophilus (strain ATCC BAA-1301 / DSM 18059 / JW/NM-WN-LF)</name>
    <dbReference type="NCBI Taxonomy" id="457570"/>
    <lineage>
        <taxon>Bacteria</taxon>
        <taxon>Bacillati</taxon>
        <taxon>Bacillota</taxon>
        <taxon>Clostridia</taxon>
        <taxon>Natranaerobiales</taxon>
        <taxon>Natranaerobiaceae</taxon>
        <taxon>Natranaerobius</taxon>
    </lineage>
</organism>
<name>Y1957_NATTJ</name>
<gene>
    <name type="ordered locus">Nther_1957</name>
</gene>
<feature type="chain" id="PRO_0000388907" description="UPF0756 membrane protein Nther_1957">
    <location>
        <begin position="1"/>
        <end position="149"/>
    </location>
</feature>
<feature type="transmembrane region" description="Helical" evidence="1">
    <location>
        <begin position="5"/>
        <end position="25"/>
    </location>
</feature>
<feature type="transmembrane region" description="Helical" evidence="1">
    <location>
        <begin position="52"/>
        <end position="72"/>
    </location>
</feature>
<feature type="transmembrane region" description="Helical" evidence="1">
    <location>
        <begin position="85"/>
        <end position="105"/>
    </location>
</feature>
<feature type="transmembrane region" description="Helical" evidence="1">
    <location>
        <begin position="111"/>
        <end position="131"/>
    </location>
</feature>